<evidence type="ECO:0000250" key="1"/>
<evidence type="ECO:0000255" key="2"/>
<evidence type="ECO:0000305" key="3"/>
<accession>D2Y219</accession>
<keyword id="KW-1015">Disulfide bond</keyword>
<keyword id="KW-0528">Neurotoxin</keyword>
<keyword id="KW-0629">Postsynaptic neurotoxin</keyword>
<keyword id="KW-0964">Secreted</keyword>
<keyword id="KW-0732">Signal</keyword>
<keyword id="KW-0800">Toxin</keyword>
<reference key="1">
    <citation type="journal article" date="2010" name="J. Proteome Res.">
        <title>Molecular diversification of peptide toxins from the tarantula Haplopelma hainanum (Ornithoctonus hainana) venom based on transcriptomic, peptidomic, and genomic analyses.</title>
        <authorList>
            <person name="Tang X."/>
            <person name="Zhang Y."/>
            <person name="Hu W."/>
            <person name="Xu D."/>
            <person name="Tao H."/>
            <person name="Yang X."/>
            <person name="Li Y."/>
            <person name="Jiang L."/>
            <person name="Liang S."/>
        </authorList>
    </citation>
    <scope>NUCLEOTIDE SEQUENCE [LARGE SCALE MRNA]</scope>
    <source>
        <tissue>Venom gland</tissue>
    </source>
</reference>
<dbReference type="EMBL" id="GU292896">
    <property type="protein sequence ID" value="ADB56712.1"/>
    <property type="molecule type" value="mRNA"/>
</dbReference>
<dbReference type="SMR" id="D2Y219"/>
<dbReference type="ArachnoServer" id="AS001763">
    <property type="toxin name" value="U4-theraphotoxin-Hhn1ac"/>
</dbReference>
<dbReference type="GO" id="GO:0005576">
    <property type="term" value="C:extracellular region"/>
    <property type="evidence" value="ECO:0007669"/>
    <property type="project" value="UniProtKB-SubCell"/>
</dbReference>
<dbReference type="GO" id="GO:0035792">
    <property type="term" value="C:host cell postsynaptic membrane"/>
    <property type="evidence" value="ECO:0007669"/>
    <property type="project" value="UniProtKB-KW"/>
</dbReference>
<dbReference type="GO" id="GO:0090729">
    <property type="term" value="F:toxin activity"/>
    <property type="evidence" value="ECO:0007669"/>
    <property type="project" value="UniProtKB-KW"/>
</dbReference>
<dbReference type="InterPro" id="IPR012625">
    <property type="entry name" value="Hwtx-2-like"/>
</dbReference>
<dbReference type="Pfam" id="PF08089">
    <property type="entry name" value="Toxin_20"/>
    <property type="match status" value="1"/>
</dbReference>
<dbReference type="SUPFAM" id="SSF57059">
    <property type="entry name" value="omega toxin-like"/>
    <property type="match status" value="1"/>
</dbReference>
<dbReference type="PROSITE" id="PS60022">
    <property type="entry name" value="HWTX_2"/>
    <property type="match status" value="1"/>
</dbReference>
<comment type="function">
    <text evidence="1">Postsynaptic neurotoxin.</text>
</comment>
<comment type="subcellular location">
    <subcellularLocation>
        <location evidence="1">Secreted</location>
    </subcellularLocation>
</comment>
<comment type="tissue specificity">
    <text>Expressed by the venom gland.</text>
</comment>
<comment type="similarity">
    <text evidence="3">Belongs to the neurotoxin 12 (Hwtx-2) family. 02 (Hwtx-2) subfamily.</text>
</comment>
<protein>
    <recommendedName>
        <fullName>U4-theraphotoxin-Hhn1ac</fullName>
        <shortName>U4-TRTX-Hhn1ac</shortName>
    </recommendedName>
    <alternativeName>
        <fullName>Hainantoxin-II-8</fullName>
        <shortName>HNTX-II-8</shortName>
    </alternativeName>
</protein>
<name>H2H01_CYRHA</name>
<sequence length="84" mass="9309">MKVTLIAILTCAAVLVLHTTAAEELEESQLMEVGMPDTELAAVDEERLFECSVSCEIEKEGNKDCKKKKCKGGWKCKFNICVKV</sequence>
<proteinExistence type="evidence at transcript level"/>
<organism>
    <name type="scientific">Cyriopagopus hainanus</name>
    <name type="common">Chinese bird spider</name>
    <name type="synonym">Haplopelma hainanum</name>
    <dbReference type="NCBI Taxonomy" id="209901"/>
    <lineage>
        <taxon>Eukaryota</taxon>
        <taxon>Metazoa</taxon>
        <taxon>Ecdysozoa</taxon>
        <taxon>Arthropoda</taxon>
        <taxon>Chelicerata</taxon>
        <taxon>Arachnida</taxon>
        <taxon>Araneae</taxon>
        <taxon>Mygalomorphae</taxon>
        <taxon>Theraphosidae</taxon>
        <taxon>Haplopelma</taxon>
    </lineage>
</organism>
<feature type="signal peptide" evidence="2">
    <location>
        <begin position="1"/>
        <end position="22"/>
    </location>
</feature>
<feature type="propeptide" id="PRO_0000400781" evidence="1">
    <location>
        <begin position="23"/>
        <end position="47"/>
    </location>
</feature>
<feature type="peptide" id="PRO_0000400782" description="U4-theraphotoxin-Hhn1ac">
    <location>
        <begin position="48"/>
        <end position="84"/>
    </location>
</feature>
<feature type="disulfide bond" evidence="1">
    <location>
        <begin position="51"/>
        <end position="65"/>
    </location>
</feature>
<feature type="disulfide bond" evidence="1">
    <location>
        <begin position="55"/>
        <end position="76"/>
    </location>
</feature>
<feature type="disulfide bond" evidence="1">
    <location>
        <begin position="70"/>
        <end position="81"/>
    </location>
</feature>